<keyword id="KW-0030">Aminoacyl-tRNA synthetase</keyword>
<keyword id="KW-0067">ATP-binding</keyword>
<keyword id="KW-0963">Cytoplasm</keyword>
<keyword id="KW-0436">Ligase</keyword>
<keyword id="KW-0547">Nucleotide-binding</keyword>
<keyword id="KW-0648">Protein biosynthesis</keyword>
<evidence type="ECO:0000255" key="1">
    <source>
        <dbReference type="HAMAP-Rule" id="MF_00022"/>
    </source>
</evidence>
<dbReference type="EC" id="6.1.1.17" evidence="1"/>
<dbReference type="EMBL" id="CP001184">
    <property type="protein sequence ID" value="ACI60133.1"/>
    <property type="molecule type" value="Genomic_DNA"/>
</dbReference>
<dbReference type="RefSeq" id="WP_004026196.1">
    <property type="nucleotide sequence ID" value="NC_011374.1"/>
</dbReference>
<dbReference type="SMR" id="B5ZCB4"/>
<dbReference type="STRING" id="565575.UUR10_0704"/>
<dbReference type="GeneID" id="93849155"/>
<dbReference type="KEGG" id="uue:UUR10_0704"/>
<dbReference type="eggNOG" id="COG0008">
    <property type="taxonomic scope" value="Bacteria"/>
</dbReference>
<dbReference type="HOGENOM" id="CLU_015768_6_1_14"/>
<dbReference type="OrthoDB" id="9807503at2"/>
<dbReference type="Proteomes" id="UP000002018">
    <property type="component" value="Chromosome"/>
</dbReference>
<dbReference type="GO" id="GO:0005829">
    <property type="term" value="C:cytosol"/>
    <property type="evidence" value="ECO:0007669"/>
    <property type="project" value="TreeGrafter"/>
</dbReference>
<dbReference type="GO" id="GO:0005524">
    <property type="term" value="F:ATP binding"/>
    <property type="evidence" value="ECO:0007669"/>
    <property type="project" value="UniProtKB-UniRule"/>
</dbReference>
<dbReference type="GO" id="GO:0004818">
    <property type="term" value="F:glutamate-tRNA ligase activity"/>
    <property type="evidence" value="ECO:0007669"/>
    <property type="project" value="UniProtKB-UniRule"/>
</dbReference>
<dbReference type="GO" id="GO:0000049">
    <property type="term" value="F:tRNA binding"/>
    <property type="evidence" value="ECO:0007669"/>
    <property type="project" value="InterPro"/>
</dbReference>
<dbReference type="GO" id="GO:0008270">
    <property type="term" value="F:zinc ion binding"/>
    <property type="evidence" value="ECO:0007669"/>
    <property type="project" value="InterPro"/>
</dbReference>
<dbReference type="GO" id="GO:0006424">
    <property type="term" value="P:glutamyl-tRNA aminoacylation"/>
    <property type="evidence" value="ECO:0007669"/>
    <property type="project" value="UniProtKB-UniRule"/>
</dbReference>
<dbReference type="CDD" id="cd00808">
    <property type="entry name" value="GluRS_core"/>
    <property type="match status" value="1"/>
</dbReference>
<dbReference type="FunFam" id="3.40.50.620:FF:000007">
    <property type="entry name" value="Glutamate--tRNA ligase"/>
    <property type="match status" value="1"/>
</dbReference>
<dbReference type="Gene3D" id="1.10.10.350">
    <property type="match status" value="1"/>
</dbReference>
<dbReference type="Gene3D" id="3.40.50.620">
    <property type="entry name" value="HUPs"/>
    <property type="match status" value="1"/>
</dbReference>
<dbReference type="HAMAP" id="MF_00022">
    <property type="entry name" value="Glu_tRNA_synth_type1"/>
    <property type="match status" value="1"/>
</dbReference>
<dbReference type="InterPro" id="IPR045462">
    <property type="entry name" value="aa-tRNA-synth_I_cd-bd"/>
</dbReference>
<dbReference type="InterPro" id="IPR020751">
    <property type="entry name" value="aa-tRNA-synth_I_codon-bd_sub2"/>
</dbReference>
<dbReference type="InterPro" id="IPR001412">
    <property type="entry name" value="aa-tRNA-synth_I_CS"/>
</dbReference>
<dbReference type="InterPro" id="IPR008925">
    <property type="entry name" value="aa_tRNA-synth_I_cd-bd_sf"/>
</dbReference>
<dbReference type="InterPro" id="IPR004527">
    <property type="entry name" value="Glu-tRNA-ligase_bac/mito"/>
</dbReference>
<dbReference type="InterPro" id="IPR000924">
    <property type="entry name" value="Glu/Gln-tRNA-synth"/>
</dbReference>
<dbReference type="InterPro" id="IPR020058">
    <property type="entry name" value="Glu/Gln-tRNA-synth_Ib_cat-dom"/>
</dbReference>
<dbReference type="InterPro" id="IPR049940">
    <property type="entry name" value="GluQ/Sye"/>
</dbReference>
<dbReference type="InterPro" id="IPR033910">
    <property type="entry name" value="GluRS_core"/>
</dbReference>
<dbReference type="InterPro" id="IPR014729">
    <property type="entry name" value="Rossmann-like_a/b/a_fold"/>
</dbReference>
<dbReference type="NCBIfam" id="TIGR00464">
    <property type="entry name" value="gltX_bact"/>
    <property type="match status" value="1"/>
</dbReference>
<dbReference type="PANTHER" id="PTHR43311">
    <property type="entry name" value="GLUTAMATE--TRNA LIGASE"/>
    <property type="match status" value="1"/>
</dbReference>
<dbReference type="PANTHER" id="PTHR43311:SF2">
    <property type="entry name" value="GLUTAMATE--TRNA LIGASE, MITOCHONDRIAL-RELATED"/>
    <property type="match status" value="1"/>
</dbReference>
<dbReference type="Pfam" id="PF19269">
    <property type="entry name" value="Anticodon_2"/>
    <property type="match status" value="1"/>
</dbReference>
<dbReference type="Pfam" id="PF00749">
    <property type="entry name" value="tRNA-synt_1c"/>
    <property type="match status" value="1"/>
</dbReference>
<dbReference type="PRINTS" id="PR00987">
    <property type="entry name" value="TRNASYNTHGLU"/>
</dbReference>
<dbReference type="SUPFAM" id="SSF48163">
    <property type="entry name" value="An anticodon-binding domain of class I aminoacyl-tRNA synthetases"/>
    <property type="match status" value="1"/>
</dbReference>
<dbReference type="SUPFAM" id="SSF52374">
    <property type="entry name" value="Nucleotidylyl transferase"/>
    <property type="match status" value="1"/>
</dbReference>
<dbReference type="PROSITE" id="PS00178">
    <property type="entry name" value="AA_TRNA_LIGASE_I"/>
    <property type="match status" value="1"/>
</dbReference>
<comment type="function">
    <text evidence="1">Catalyzes the attachment of glutamate to tRNA(Glu) in a two-step reaction: glutamate is first activated by ATP to form Glu-AMP and then transferred to the acceptor end of tRNA(Glu).</text>
</comment>
<comment type="catalytic activity">
    <reaction evidence="1">
        <text>tRNA(Glu) + L-glutamate + ATP = L-glutamyl-tRNA(Glu) + AMP + diphosphate</text>
        <dbReference type="Rhea" id="RHEA:23540"/>
        <dbReference type="Rhea" id="RHEA-COMP:9663"/>
        <dbReference type="Rhea" id="RHEA-COMP:9680"/>
        <dbReference type="ChEBI" id="CHEBI:29985"/>
        <dbReference type="ChEBI" id="CHEBI:30616"/>
        <dbReference type="ChEBI" id="CHEBI:33019"/>
        <dbReference type="ChEBI" id="CHEBI:78442"/>
        <dbReference type="ChEBI" id="CHEBI:78520"/>
        <dbReference type="ChEBI" id="CHEBI:456215"/>
        <dbReference type="EC" id="6.1.1.17"/>
    </reaction>
</comment>
<comment type="subunit">
    <text evidence="1">Monomer.</text>
</comment>
<comment type="subcellular location">
    <subcellularLocation>
        <location evidence="1">Cytoplasm</location>
    </subcellularLocation>
</comment>
<comment type="similarity">
    <text evidence="1">Belongs to the class-I aminoacyl-tRNA synthetase family. Glutamate--tRNA ligase type 1 subfamily.</text>
</comment>
<reference key="1">
    <citation type="submission" date="2008-10" db="EMBL/GenBank/DDBJ databases">
        <title>Genome sequence of Ureaplasma urealyticum serovar 10 ATCC-33699.</title>
        <authorList>
            <person name="Shrivastava S."/>
            <person name="Methe B.A."/>
            <person name="Glass J."/>
            <person name="White K."/>
            <person name="Duffy L.B."/>
        </authorList>
    </citation>
    <scope>NUCLEOTIDE SEQUENCE [LARGE SCALE GENOMIC DNA]</scope>
    <source>
        <strain>ATCC 33699 / Western</strain>
    </source>
</reference>
<proteinExistence type="inferred from homology"/>
<protein>
    <recommendedName>
        <fullName evidence="1">Glutamate--tRNA ligase</fullName>
        <ecNumber evidence="1">6.1.1.17</ecNumber>
    </recommendedName>
    <alternativeName>
        <fullName evidence="1">Glutamyl-tRNA synthetase</fullName>
        <shortName evidence="1">GluRS</shortName>
    </alternativeName>
</protein>
<gene>
    <name evidence="1" type="primary">gltX</name>
    <name type="ordered locus">UUR10_0704</name>
</gene>
<feature type="chain" id="PRO_1000090119" description="Glutamate--tRNA ligase">
    <location>
        <begin position="1"/>
        <end position="482"/>
    </location>
</feature>
<feature type="short sequence motif" description="'HIGH' region" evidence="1">
    <location>
        <begin position="9"/>
        <end position="19"/>
    </location>
</feature>
<feature type="short sequence motif" description="'KMSKS' region" evidence="1">
    <location>
        <begin position="252"/>
        <end position="256"/>
    </location>
</feature>
<feature type="binding site" evidence="1">
    <location>
        <position position="255"/>
    </location>
    <ligand>
        <name>ATP</name>
        <dbReference type="ChEBI" id="CHEBI:30616"/>
    </ligand>
</feature>
<name>SYE_UREU1</name>
<organism>
    <name type="scientific">Ureaplasma urealyticum serovar 10 (strain ATCC 33699 / Western)</name>
    <dbReference type="NCBI Taxonomy" id="565575"/>
    <lineage>
        <taxon>Bacteria</taxon>
        <taxon>Bacillati</taxon>
        <taxon>Mycoplasmatota</taxon>
        <taxon>Mycoplasmoidales</taxon>
        <taxon>Mycoplasmoidaceae</taxon>
        <taxon>Ureaplasma</taxon>
    </lineage>
</organism>
<accession>B5ZCB4</accession>
<sequence>MKIRTRYAPSPTGYLHIGGARTALFNYLLAKAYDGDFIIRIEDTDVERNVEGGIDSQFNFLEWMGIVADESIRNPKTFGPYIQSQKLKHYEALALDLVAQKKAYFCFCSKERLDADRELAEKLHETPKYKRHCLNLNEQTIQANLLANKEYTIRLKIDENNEYSWDDLIRGKISIPGSALTDPVILKSNKIAMYNFAVVIDDYEMQISHVIRGEEHISNTPYQLAIAQALNYDLSKIKYGHLSIIVDETGKKLSKRNLALKQFVSDYEKDGYWPHAITNFVALLGWSPKNNQEIMSLVEMVENFDVNNLSKSPAFFDINKMNWFSTQYFNNISQDEFIDFVKTHPLTKELVLKDTTFIDKALLFKSHIVNLKQLINLVDEQFNSNKQLLEEDVNHIKNNQLTNVVQVFYEQLIVSEKFDEQSIKEVIKQVQKTTNNKGANLYMPIRIATTFSSHGPELAKTIYYLGRENVLKNLQSILKVLG</sequence>